<sequence length="84" mass="8942">MKIISFVLPCLLVLAGCSTPSQPEAPKPPQIGMANPASVYCQQKGGTLIPVQTAQGVSNNCKLPGGETIDEWALWRRDHPAGEK</sequence>
<organism>
    <name type="scientific">Escherichia coli O6:H1 (strain CFT073 / ATCC 700928 / UPEC)</name>
    <dbReference type="NCBI Taxonomy" id="199310"/>
    <lineage>
        <taxon>Bacteria</taxon>
        <taxon>Pseudomonadati</taxon>
        <taxon>Pseudomonadota</taxon>
        <taxon>Gammaproteobacteria</taxon>
        <taxon>Enterobacterales</taxon>
        <taxon>Enterobacteriaceae</taxon>
        <taxon>Escherichia</taxon>
    </lineage>
</organism>
<feature type="chain" id="PRO_0000169035" description="Uncharacterized protein YoaF">
    <location>
        <begin position="1"/>
        <end position="84"/>
    </location>
</feature>
<gene>
    <name type="primary">yoaF</name>
    <name type="ordered locus">c2198</name>
</gene>
<proteinExistence type="predicted"/>
<keyword id="KW-1185">Reference proteome</keyword>
<name>YOAF_ECOL6</name>
<reference key="1">
    <citation type="journal article" date="2002" name="Proc. Natl. Acad. Sci. U.S.A.">
        <title>Extensive mosaic structure revealed by the complete genome sequence of uropathogenic Escherichia coli.</title>
        <authorList>
            <person name="Welch R.A."/>
            <person name="Burland V."/>
            <person name="Plunkett G. III"/>
            <person name="Redford P."/>
            <person name="Roesch P."/>
            <person name="Rasko D."/>
            <person name="Buckles E.L."/>
            <person name="Liou S.-R."/>
            <person name="Boutin A."/>
            <person name="Hackett J."/>
            <person name="Stroud D."/>
            <person name="Mayhew G.F."/>
            <person name="Rose D.J."/>
            <person name="Zhou S."/>
            <person name="Schwartz D.C."/>
            <person name="Perna N.T."/>
            <person name="Mobley H.L.T."/>
            <person name="Donnenberg M.S."/>
            <person name="Blattner F.R."/>
        </authorList>
    </citation>
    <scope>NUCLEOTIDE SEQUENCE [LARGE SCALE GENOMIC DNA]</scope>
    <source>
        <strain>CFT073 / ATCC 700928 / UPEC</strain>
    </source>
</reference>
<protein>
    <recommendedName>
        <fullName>Uncharacterized protein YoaF</fullName>
    </recommendedName>
</protein>
<accession>P64494</accession>
<accession>P76244</accession>
<dbReference type="EMBL" id="AE014075">
    <property type="protein sequence ID" value="AAN80657.1"/>
    <property type="molecule type" value="Genomic_DNA"/>
</dbReference>
<dbReference type="RefSeq" id="WP_000691930.1">
    <property type="nucleotide sequence ID" value="NZ_CP051263.1"/>
</dbReference>
<dbReference type="STRING" id="199310.c2198"/>
<dbReference type="GeneID" id="75171860"/>
<dbReference type="KEGG" id="ecc:c2198"/>
<dbReference type="eggNOG" id="COG3042">
    <property type="taxonomic scope" value="Bacteria"/>
</dbReference>
<dbReference type="HOGENOM" id="CLU_155318_1_0_6"/>
<dbReference type="BioCyc" id="ECOL199310:C2198-MONOMER"/>
<dbReference type="Proteomes" id="UP000001410">
    <property type="component" value="Chromosome"/>
</dbReference>
<dbReference type="InterPro" id="IPR005590">
    <property type="entry name" value="DUF333"/>
</dbReference>
<dbReference type="PANTHER" id="PTHR38008:SF2">
    <property type="entry name" value="HEMOLYSIN"/>
    <property type="match status" value="1"/>
</dbReference>
<dbReference type="PANTHER" id="PTHR38008">
    <property type="entry name" value="HEMOLYSIN-RELATED"/>
    <property type="match status" value="1"/>
</dbReference>
<dbReference type="Pfam" id="PF03891">
    <property type="entry name" value="DUF333"/>
    <property type="match status" value="1"/>
</dbReference>
<dbReference type="PROSITE" id="PS51257">
    <property type="entry name" value="PROKAR_LIPOPROTEIN"/>
    <property type="match status" value="1"/>
</dbReference>